<reference key="1">
    <citation type="journal article" date="2005" name="J. Bacteriol.">
        <title>The genome of Sulfolobus acidocaldarius, a model organism of the Crenarchaeota.</title>
        <authorList>
            <person name="Chen L."/>
            <person name="Bruegger K."/>
            <person name="Skovgaard M."/>
            <person name="Redder P."/>
            <person name="She Q."/>
            <person name="Torarinsson E."/>
            <person name="Greve B."/>
            <person name="Awayez M."/>
            <person name="Zibat A."/>
            <person name="Klenk H.-P."/>
            <person name="Garrett R.A."/>
        </authorList>
    </citation>
    <scope>NUCLEOTIDE SEQUENCE [LARGE SCALE GENOMIC DNA]</scope>
    <source>
        <strain>ATCC 33909 / DSM 639 / JCM 8929 / NBRC 15157 / NCIMB 11770</strain>
    </source>
</reference>
<reference key="2">
    <citation type="journal article" date="2008" name="Science">
        <title>A role for the ESCRT system in cell division in archaea.</title>
        <authorList>
            <person name="Samson R.Y."/>
            <person name="Obita T."/>
            <person name="Freund S.M."/>
            <person name="Williams R.L."/>
            <person name="Bell S.D."/>
        </authorList>
    </citation>
    <scope>INDUCTION</scope>
</reference>
<reference key="3">
    <citation type="journal article" date="2014" name="Extremophiles">
        <title>Deletion of cdvB paralogous genes of Sulfolobus acidocaldarius impairs cell division.</title>
        <authorList>
            <person name="Yang N."/>
            <person name="Driessen A.J."/>
        </authorList>
    </citation>
    <scope>FUNCTION</scope>
    <scope>DISRUPTION PHENOTYPE</scope>
    <source>
        <strain>MR31</strain>
    </source>
</reference>
<protein>
    <recommendedName>
        <fullName evidence="4">Cell division protein B1</fullName>
    </recommendedName>
    <alternativeName>
        <fullName evidence="4">ESCRT-III homolog</fullName>
    </alternativeName>
</protein>
<sequence>MTAIYILTMISKEFQKIWEGNQKVKIPKSKDPLKYRLVQAQYRVRSMVSRLDVYIGRMQERDKVLFERVVESQMSKDQSRAAMYANELAEIRKITKQLLTTQIALEQVSLRLETVTELGDIFANLIPVMGVINELKTSLKGVMPELSIELGELGEGLQEIVIEAGEFSGVSGISATYSPEARQILEEASVVAEQRMKEKFPSLPAAGITQQQKS</sequence>
<name>CDVB1_SULAC</name>
<gene>
    <name evidence="3" type="primary">cdvB1</name>
    <name evidence="5" type="ordered locus">Saci_0451</name>
</gene>
<dbReference type="EMBL" id="CP000077">
    <property type="protein sequence ID" value="AAY79863.1"/>
    <property type="molecule type" value="Genomic_DNA"/>
</dbReference>
<dbReference type="RefSeq" id="WP_011277365.1">
    <property type="nucleotide sequence ID" value="NC_007181.1"/>
</dbReference>
<dbReference type="SMR" id="Q4JBG6"/>
<dbReference type="STRING" id="330779.Saci_0451"/>
<dbReference type="TCDB" id="3.A.31.1.3">
    <property type="family name" value="the endosomal sorting complexes required for transport iii (escrt-iii) family"/>
</dbReference>
<dbReference type="GeneID" id="14550978"/>
<dbReference type="KEGG" id="sai:Saci_0451"/>
<dbReference type="PATRIC" id="fig|330779.12.peg.449"/>
<dbReference type="eggNOG" id="arCOG00452">
    <property type="taxonomic scope" value="Archaea"/>
</dbReference>
<dbReference type="HOGENOM" id="CLU_095961_0_0_2"/>
<dbReference type="Proteomes" id="UP000001018">
    <property type="component" value="Chromosome"/>
</dbReference>
<dbReference type="GO" id="GO:0051301">
    <property type="term" value="P:cell division"/>
    <property type="evidence" value="ECO:0007669"/>
    <property type="project" value="UniProtKB-KW"/>
</dbReference>
<dbReference type="Gene3D" id="6.10.140.1230">
    <property type="match status" value="1"/>
</dbReference>
<dbReference type="InterPro" id="IPR053492">
    <property type="entry name" value="Cell_Div_Machinery_Comp"/>
</dbReference>
<dbReference type="NCBIfam" id="NF041005">
    <property type="entry name" value="cell_div_CdvB1_B2"/>
    <property type="match status" value="1"/>
</dbReference>
<proteinExistence type="evidence at transcript level"/>
<feature type="chain" id="PRO_0000438767" description="Cell division protein B1">
    <location>
        <begin position="1"/>
        <end position="214"/>
    </location>
</feature>
<keyword id="KW-0131">Cell cycle</keyword>
<keyword id="KW-0132">Cell division</keyword>
<keyword id="KW-1185">Reference proteome</keyword>
<comment type="function">
    <text evidence="2">Part of a cell division machinery.</text>
</comment>
<comment type="induction">
    <text evidence="1">Expression is highest in dividing cells.</text>
</comment>
<comment type="disruption phenotype">
    <text evidence="2">Deletion mutant forms small colonies on selective plates. Forms enlarged cells, with a highly elevated content of DNA.</text>
</comment>
<organism>
    <name type="scientific">Sulfolobus acidocaldarius (strain ATCC 33909 / DSM 639 / JCM 8929 / NBRC 15157 / NCIMB 11770)</name>
    <dbReference type="NCBI Taxonomy" id="330779"/>
    <lineage>
        <taxon>Archaea</taxon>
        <taxon>Thermoproteota</taxon>
        <taxon>Thermoprotei</taxon>
        <taxon>Sulfolobales</taxon>
        <taxon>Sulfolobaceae</taxon>
        <taxon>Sulfolobus</taxon>
    </lineage>
</organism>
<evidence type="ECO:0000269" key="1">
    <source>
    </source>
</evidence>
<evidence type="ECO:0000269" key="2">
    <source>
    </source>
</evidence>
<evidence type="ECO:0000303" key="3">
    <source>
    </source>
</evidence>
<evidence type="ECO:0000305" key="4"/>
<evidence type="ECO:0000312" key="5">
    <source>
        <dbReference type="EMBL" id="AAY79863.1"/>
    </source>
</evidence>
<accession>Q4JBG6</accession>